<comment type="function">
    <text evidence="1">Plays a role in cell envelope biogenesis, maintenance of cell envelope integrity and membrane homeostasis.</text>
</comment>
<comment type="subcellular location">
    <subcellularLocation>
        <location evidence="1">Cell inner membrane</location>
        <topology evidence="1">Multi-pass membrane protein</topology>
    </subcellularLocation>
</comment>
<comment type="similarity">
    <text evidence="1">Belongs to the YciB family.</text>
</comment>
<dbReference type="EMBL" id="CP000285">
    <property type="protein sequence ID" value="ABE58067.1"/>
    <property type="molecule type" value="Genomic_DNA"/>
</dbReference>
<dbReference type="RefSeq" id="WP_011506013.1">
    <property type="nucleotide sequence ID" value="NC_007963.1"/>
</dbReference>
<dbReference type="STRING" id="290398.Csal_0706"/>
<dbReference type="GeneID" id="95333464"/>
<dbReference type="KEGG" id="csa:Csal_0706"/>
<dbReference type="eggNOG" id="COG2917">
    <property type="taxonomic scope" value="Bacteria"/>
</dbReference>
<dbReference type="HOGENOM" id="CLU_089554_2_0_6"/>
<dbReference type="OrthoDB" id="9788219at2"/>
<dbReference type="Proteomes" id="UP000000239">
    <property type="component" value="Chromosome"/>
</dbReference>
<dbReference type="GO" id="GO:0005886">
    <property type="term" value="C:plasma membrane"/>
    <property type="evidence" value="ECO:0007669"/>
    <property type="project" value="UniProtKB-SubCell"/>
</dbReference>
<dbReference type="HAMAP" id="MF_00189">
    <property type="entry name" value="YciB"/>
    <property type="match status" value="1"/>
</dbReference>
<dbReference type="InterPro" id="IPR006008">
    <property type="entry name" value="YciB"/>
</dbReference>
<dbReference type="NCBIfam" id="TIGR00997">
    <property type="entry name" value="ispZ"/>
    <property type="match status" value="1"/>
</dbReference>
<dbReference type="NCBIfam" id="NF001324">
    <property type="entry name" value="PRK00259.1-2"/>
    <property type="match status" value="1"/>
</dbReference>
<dbReference type="NCBIfam" id="NF001325">
    <property type="entry name" value="PRK00259.1-3"/>
    <property type="match status" value="1"/>
</dbReference>
<dbReference type="PANTHER" id="PTHR36917:SF1">
    <property type="entry name" value="INNER MEMBRANE-SPANNING PROTEIN YCIB"/>
    <property type="match status" value="1"/>
</dbReference>
<dbReference type="PANTHER" id="PTHR36917">
    <property type="entry name" value="INTRACELLULAR SEPTATION PROTEIN A-RELATED"/>
    <property type="match status" value="1"/>
</dbReference>
<dbReference type="Pfam" id="PF04279">
    <property type="entry name" value="IspA"/>
    <property type="match status" value="1"/>
</dbReference>
<organism>
    <name type="scientific">Chromohalobacter salexigens (strain ATCC BAA-138 / DSM 3043 / CIP 106854 / NCIMB 13768 / 1H11)</name>
    <dbReference type="NCBI Taxonomy" id="290398"/>
    <lineage>
        <taxon>Bacteria</taxon>
        <taxon>Pseudomonadati</taxon>
        <taxon>Pseudomonadota</taxon>
        <taxon>Gammaproteobacteria</taxon>
        <taxon>Oceanospirillales</taxon>
        <taxon>Halomonadaceae</taxon>
        <taxon>Chromohalobacter</taxon>
    </lineage>
</organism>
<protein>
    <recommendedName>
        <fullName evidence="1">Inner membrane-spanning protein YciB</fullName>
    </recommendedName>
</protein>
<keyword id="KW-0997">Cell inner membrane</keyword>
<keyword id="KW-1003">Cell membrane</keyword>
<keyword id="KW-0472">Membrane</keyword>
<keyword id="KW-1185">Reference proteome</keyword>
<keyword id="KW-0812">Transmembrane</keyword>
<keyword id="KW-1133">Transmembrane helix</keyword>
<reference key="1">
    <citation type="journal article" date="2011" name="Stand. Genomic Sci.">
        <title>Complete genome sequence of the halophilic and highly halotolerant Chromohalobacter salexigens type strain (1H11(T)).</title>
        <authorList>
            <person name="Copeland A."/>
            <person name="O'Connor K."/>
            <person name="Lucas S."/>
            <person name="Lapidus A."/>
            <person name="Berry K.W."/>
            <person name="Detter J.C."/>
            <person name="Del Rio T.G."/>
            <person name="Hammon N."/>
            <person name="Dalin E."/>
            <person name="Tice H."/>
            <person name="Pitluck S."/>
            <person name="Bruce D."/>
            <person name="Goodwin L."/>
            <person name="Han C."/>
            <person name="Tapia R."/>
            <person name="Saunders E."/>
            <person name="Schmutz J."/>
            <person name="Brettin T."/>
            <person name="Larimer F."/>
            <person name="Land M."/>
            <person name="Hauser L."/>
            <person name="Vargas C."/>
            <person name="Nieto J.J."/>
            <person name="Kyrpides N.C."/>
            <person name="Ivanova N."/>
            <person name="Goker M."/>
            <person name="Klenk H.P."/>
            <person name="Csonka L.N."/>
            <person name="Woyke T."/>
        </authorList>
    </citation>
    <scope>NUCLEOTIDE SEQUENCE [LARGE SCALE GENOMIC DNA]</scope>
    <source>
        <strain>ATCC BAA-138 / DSM 3043 / CIP 106854 / NCIMB 13768 / 1H11</strain>
    </source>
</reference>
<accession>Q1QZP1</accession>
<feature type="chain" id="PRO_1000021003" description="Inner membrane-spanning protein YciB">
    <location>
        <begin position="1"/>
        <end position="189"/>
    </location>
</feature>
<feature type="transmembrane region" description="Helical" evidence="1">
    <location>
        <begin position="23"/>
        <end position="43"/>
    </location>
</feature>
<feature type="transmembrane region" description="Helical" evidence="1">
    <location>
        <begin position="54"/>
        <end position="74"/>
    </location>
</feature>
<feature type="transmembrane region" description="Helical" evidence="1">
    <location>
        <begin position="82"/>
        <end position="102"/>
    </location>
</feature>
<feature type="transmembrane region" description="Helical" evidence="1">
    <location>
        <begin position="120"/>
        <end position="140"/>
    </location>
</feature>
<feature type="transmembrane region" description="Helical" evidence="1">
    <location>
        <begin position="150"/>
        <end position="170"/>
    </location>
</feature>
<proteinExistence type="inferred from homology"/>
<sequence length="189" mass="21485">MKMLVDFLPIALFFAVYHLSDDILLATLVLIPATLAQVAFVWWRYRRVEKMQLITLALVVVMGGATVIFHDAAFIQWKPTVVNWLFAFAFLVAPLFGGKTLIERMMGKAIALPAATWRRLNLAWVAFFIALGAINVYVFKTYDEATWVNFKLFGMLGLTLLFVLGQGVYLARHMPRDTLSQNDHQKDDV</sequence>
<evidence type="ECO:0000255" key="1">
    <source>
        <dbReference type="HAMAP-Rule" id="MF_00189"/>
    </source>
</evidence>
<name>YCIB_CHRSD</name>
<gene>
    <name evidence="1" type="primary">yciB</name>
    <name type="ordered locus">Csal_0706</name>
</gene>